<feature type="chain" id="PRO_0000371496" description="Uncharacterized protein SMPP15">
    <location>
        <begin position="1" status="less than"/>
        <end position="10" status="greater than"/>
    </location>
</feature>
<feature type="unsure residue" description="L or I" evidence="1">
    <location>
        <position position="1"/>
    </location>
</feature>
<feature type="unsure residue" description="I or L" evidence="1">
    <location>
        <position position="3"/>
    </location>
</feature>
<feature type="non-terminal residue" evidence="2">
    <location>
        <position position="1"/>
    </location>
</feature>
<feature type="non-terminal residue" evidence="2">
    <location>
        <position position="10"/>
    </location>
</feature>
<accession>P85380</accession>
<evidence type="ECO:0000269" key="1">
    <source>
    </source>
</evidence>
<evidence type="ECO:0000303" key="2">
    <source>
    </source>
</evidence>
<protein>
    <recommendedName>
        <fullName evidence="2">Uncharacterized protein SMPP15</fullName>
    </recommendedName>
</protein>
<proteinExistence type="evidence at protein level"/>
<organism>
    <name type="scientific">Nautilus macromphalus</name>
    <name type="common">Bellybutton nautilus</name>
    <dbReference type="NCBI Taxonomy" id="34576"/>
    <lineage>
        <taxon>Eukaryota</taxon>
        <taxon>Metazoa</taxon>
        <taxon>Spiralia</taxon>
        <taxon>Lophotrochozoa</taxon>
        <taxon>Mollusca</taxon>
        <taxon>Cephalopoda</taxon>
        <taxon>Nautiloidea</taxon>
        <taxon>Nautilida</taxon>
        <taxon>Nautilidae</taxon>
        <taxon>Nautilus</taxon>
    </lineage>
</organism>
<comment type="tissue specificity">
    <text evidence="1">Nacreous layer of shell.</text>
</comment>
<name>SMP15_NAUMA</name>
<keyword id="KW-0903">Direct protein sequencing</keyword>
<reference key="1">
    <citation type="journal article" date="2009" name="ChemBioChem">
        <title>Evolution of nacre: biochemistry and 'shellomics' of the shell organic matrix of the cephalopod Nautilus macromphalus.</title>
        <authorList>
            <person name="Marie B."/>
            <person name="Marin F."/>
            <person name="Marie A."/>
            <person name="Bedouet L."/>
            <person name="Dubost L."/>
            <person name="Alcaraz G."/>
            <person name="Milet C."/>
            <person name="Luquet G."/>
        </authorList>
    </citation>
    <scope>PROTEIN SEQUENCE</scope>
    <scope>TISSUE SPECIFICITY</scope>
    <source>
        <tissue>Shell</tissue>
    </source>
</reference>
<sequence>LGICFASMPR</sequence>